<reference key="1">
    <citation type="journal article" date="2006" name="Proc. Natl. Acad. Sci. U.S.A.">
        <title>Molecular genetic anatomy of inter- and intraserotype variation in the human bacterial pathogen group A Streptococcus.</title>
        <authorList>
            <person name="Beres S.B."/>
            <person name="Richter E.W."/>
            <person name="Nagiec M.J."/>
            <person name="Sumby P."/>
            <person name="Porcella S.F."/>
            <person name="DeLeo F.R."/>
            <person name="Musser J.M."/>
        </authorList>
    </citation>
    <scope>NUCLEOTIDE SEQUENCE [LARGE SCALE GENOMIC DNA]</scope>
    <source>
        <strain>MGAS10270</strain>
    </source>
</reference>
<comment type="function">
    <text evidence="1">Forms part of the ribosomal stalk which helps the ribosome interact with GTP-bound translation factors.</text>
</comment>
<comment type="subunit">
    <text evidence="1">Part of the ribosomal stalk of the 50S ribosomal subunit. Interacts with L10 and the large rRNA to form the base of the stalk. L10 forms an elongated spine to which L12 dimers bind in a sequential fashion forming a multimeric L10(L12)X complex.</text>
</comment>
<comment type="PTM">
    <text evidence="1">One or more lysine residues are methylated.</text>
</comment>
<comment type="similarity">
    <text evidence="1">Belongs to the universal ribosomal protein uL11 family.</text>
</comment>
<comment type="sequence caution" evidence="2">
    <conflict type="erroneous initiation">
        <sequence resource="EMBL-CDS" id="ABF33443"/>
    </conflict>
</comment>
<organism>
    <name type="scientific">Streptococcus pyogenes serotype M2 (strain MGAS10270)</name>
    <dbReference type="NCBI Taxonomy" id="370552"/>
    <lineage>
        <taxon>Bacteria</taxon>
        <taxon>Bacillati</taxon>
        <taxon>Bacillota</taxon>
        <taxon>Bacilli</taxon>
        <taxon>Lactobacillales</taxon>
        <taxon>Streptococcaceae</taxon>
        <taxon>Streptococcus</taxon>
    </lineage>
</organism>
<feature type="chain" id="PRO_0000258223" description="Large ribosomal subunit protein uL11">
    <location>
        <begin position="1"/>
        <end position="141"/>
    </location>
</feature>
<dbReference type="EMBL" id="CP000260">
    <property type="protein sequence ID" value="ABF33443.1"/>
    <property type="status" value="ALT_INIT"/>
    <property type="molecule type" value="Genomic_DNA"/>
</dbReference>
<dbReference type="RefSeq" id="WP_002990800.1">
    <property type="nucleotide sequence ID" value="NZ_CVUH01000002.1"/>
</dbReference>
<dbReference type="SMR" id="Q1JI80"/>
<dbReference type="GeneID" id="69901302"/>
<dbReference type="KEGG" id="sph:MGAS10270_Spy0378"/>
<dbReference type="HOGENOM" id="CLU_074237_2_1_9"/>
<dbReference type="Proteomes" id="UP000002436">
    <property type="component" value="Chromosome"/>
</dbReference>
<dbReference type="GO" id="GO:0022625">
    <property type="term" value="C:cytosolic large ribosomal subunit"/>
    <property type="evidence" value="ECO:0007669"/>
    <property type="project" value="TreeGrafter"/>
</dbReference>
<dbReference type="GO" id="GO:0070180">
    <property type="term" value="F:large ribosomal subunit rRNA binding"/>
    <property type="evidence" value="ECO:0007669"/>
    <property type="project" value="UniProtKB-UniRule"/>
</dbReference>
<dbReference type="GO" id="GO:0003735">
    <property type="term" value="F:structural constituent of ribosome"/>
    <property type="evidence" value="ECO:0007669"/>
    <property type="project" value="InterPro"/>
</dbReference>
<dbReference type="GO" id="GO:0006412">
    <property type="term" value="P:translation"/>
    <property type="evidence" value="ECO:0007669"/>
    <property type="project" value="UniProtKB-UniRule"/>
</dbReference>
<dbReference type="CDD" id="cd00349">
    <property type="entry name" value="Ribosomal_L11"/>
    <property type="match status" value="1"/>
</dbReference>
<dbReference type="FunFam" id="1.10.10.250:FF:000001">
    <property type="entry name" value="50S ribosomal protein L11"/>
    <property type="match status" value="1"/>
</dbReference>
<dbReference type="FunFam" id="3.30.1550.10:FF:000001">
    <property type="entry name" value="50S ribosomal protein L11"/>
    <property type="match status" value="1"/>
</dbReference>
<dbReference type="Gene3D" id="1.10.10.250">
    <property type="entry name" value="Ribosomal protein L11, C-terminal domain"/>
    <property type="match status" value="1"/>
</dbReference>
<dbReference type="Gene3D" id="3.30.1550.10">
    <property type="entry name" value="Ribosomal protein L11/L12, N-terminal domain"/>
    <property type="match status" value="1"/>
</dbReference>
<dbReference type="HAMAP" id="MF_00736">
    <property type="entry name" value="Ribosomal_uL11"/>
    <property type="match status" value="1"/>
</dbReference>
<dbReference type="InterPro" id="IPR000911">
    <property type="entry name" value="Ribosomal_uL11"/>
</dbReference>
<dbReference type="InterPro" id="IPR006519">
    <property type="entry name" value="Ribosomal_uL11_bac-typ"/>
</dbReference>
<dbReference type="InterPro" id="IPR020783">
    <property type="entry name" value="Ribosomal_uL11_C"/>
</dbReference>
<dbReference type="InterPro" id="IPR036769">
    <property type="entry name" value="Ribosomal_uL11_C_sf"/>
</dbReference>
<dbReference type="InterPro" id="IPR020785">
    <property type="entry name" value="Ribosomal_uL11_CS"/>
</dbReference>
<dbReference type="InterPro" id="IPR020784">
    <property type="entry name" value="Ribosomal_uL11_N"/>
</dbReference>
<dbReference type="InterPro" id="IPR036796">
    <property type="entry name" value="Ribosomal_uL11_N_sf"/>
</dbReference>
<dbReference type="NCBIfam" id="TIGR01632">
    <property type="entry name" value="L11_bact"/>
    <property type="match status" value="1"/>
</dbReference>
<dbReference type="PANTHER" id="PTHR11661">
    <property type="entry name" value="60S RIBOSOMAL PROTEIN L12"/>
    <property type="match status" value="1"/>
</dbReference>
<dbReference type="PANTHER" id="PTHR11661:SF1">
    <property type="entry name" value="LARGE RIBOSOMAL SUBUNIT PROTEIN UL11M"/>
    <property type="match status" value="1"/>
</dbReference>
<dbReference type="Pfam" id="PF00298">
    <property type="entry name" value="Ribosomal_L11"/>
    <property type="match status" value="1"/>
</dbReference>
<dbReference type="Pfam" id="PF03946">
    <property type="entry name" value="Ribosomal_L11_N"/>
    <property type="match status" value="1"/>
</dbReference>
<dbReference type="SMART" id="SM00649">
    <property type="entry name" value="RL11"/>
    <property type="match status" value="1"/>
</dbReference>
<dbReference type="SUPFAM" id="SSF54747">
    <property type="entry name" value="Ribosomal L11/L12e N-terminal domain"/>
    <property type="match status" value="1"/>
</dbReference>
<dbReference type="SUPFAM" id="SSF46906">
    <property type="entry name" value="Ribosomal protein L11, C-terminal domain"/>
    <property type="match status" value="1"/>
</dbReference>
<dbReference type="PROSITE" id="PS00359">
    <property type="entry name" value="RIBOSOMAL_L11"/>
    <property type="match status" value="1"/>
</dbReference>
<name>RL11_STRPD</name>
<protein>
    <recommendedName>
        <fullName evidence="1">Large ribosomal subunit protein uL11</fullName>
    </recommendedName>
    <alternativeName>
        <fullName evidence="2">50S ribosomal protein L11</fullName>
    </alternativeName>
</protein>
<proteinExistence type="inferred from homology"/>
<evidence type="ECO:0000255" key="1">
    <source>
        <dbReference type="HAMAP-Rule" id="MF_00736"/>
    </source>
</evidence>
<evidence type="ECO:0000305" key="2"/>
<gene>
    <name evidence="1" type="primary">rplK</name>
    <name type="ordered locus">MGAS10270_Spy0378</name>
</gene>
<keyword id="KW-0488">Methylation</keyword>
<keyword id="KW-0687">Ribonucleoprotein</keyword>
<keyword id="KW-0689">Ribosomal protein</keyword>
<keyword id="KW-0694">RNA-binding</keyword>
<keyword id="KW-0699">rRNA-binding</keyword>
<sequence>MAKKVEKLVKLQIPAGKATPAPPVGPALGQAGINIMGFTKEFNARTADQAGMIIPVVISVYEDKSFDFITKTPPAAVLLKKAAGVEKGSGTPNTTKVATVTRAQVQEIAETKMPDLNAANIEAAMRMIEGTARSMGFTVTD</sequence>
<accession>Q1JI80</accession>